<feature type="chain" id="PRO_0000427433" description="Uncharacterized protein MT1877">
    <location>
        <begin position="1"/>
        <end position="164"/>
    </location>
</feature>
<feature type="domain" description="BFN">
    <location>
        <begin position="1"/>
        <end position="129"/>
    </location>
</feature>
<protein>
    <recommendedName>
        <fullName>Uncharacterized protein MT1877</fullName>
    </recommendedName>
</protein>
<organism>
    <name type="scientific">Mycobacterium tuberculosis (strain CDC 1551 / Oshkosh)</name>
    <dbReference type="NCBI Taxonomy" id="83331"/>
    <lineage>
        <taxon>Bacteria</taxon>
        <taxon>Bacillati</taxon>
        <taxon>Actinomycetota</taxon>
        <taxon>Actinomycetes</taxon>
        <taxon>Mycobacteriales</taxon>
        <taxon>Mycobacteriaceae</taxon>
        <taxon>Mycobacterium</taxon>
        <taxon>Mycobacterium tuberculosis complex</taxon>
    </lineage>
</organism>
<proteinExistence type="predicted"/>
<accession>P9WLR4</accession>
<accession>L0TAI6</accession>
<accession>Q50604</accession>
<gene>
    <name type="ordered locus">MT1877</name>
</gene>
<dbReference type="EMBL" id="AE000516">
    <property type="protein sequence ID" value="AAK46150.1"/>
    <property type="molecule type" value="Genomic_DNA"/>
</dbReference>
<dbReference type="PIR" id="F70721">
    <property type="entry name" value="F70721"/>
</dbReference>
<dbReference type="RefSeq" id="WP_003409242.1">
    <property type="nucleotide sequence ID" value="NZ_KK341227.1"/>
</dbReference>
<dbReference type="SMR" id="P9WLR4"/>
<dbReference type="KEGG" id="mtc:MT1877"/>
<dbReference type="PATRIC" id="fig|83331.31.peg.2021"/>
<dbReference type="HOGENOM" id="CLU_096111_2_1_11"/>
<dbReference type="Proteomes" id="UP000001020">
    <property type="component" value="Chromosome"/>
</dbReference>
<dbReference type="GO" id="GO:0004518">
    <property type="term" value="F:nuclease activity"/>
    <property type="evidence" value="ECO:0007669"/>
    <property type="project" value="InterPro"/>
</dbReference>
<dbReference type="FunFam" id="3.10.690.10:FF:000001">
    <property type="entry name" value="Bifunctional nuclease family protein"/>
    <property type="match status" value="1"/>
</dbReference>
<dbReference type="Gene3D" id="3.10.690.10">
    <property type="entry name" value="Bifunctional nuclease domain"/>
    <property type="match status" value="1"/>
</dbReference>
<dbReference type="InterPro" id="IPR036104">
    <property type="entry name" value="BFN_sf"/>
</dbReference>
<dbReference type="InterPro" id="IPR003729">
    <property type="entry name" value="Bi_nuclease_dom"/>
</dbReference>
<dbReference type="PANTHER" id="PTHR15160:SF1">
    <property type="entry name" value="VON HIPPEL-LINDAU DISEASE TUMOR SUPPRESSOR"/>
    <property type="match status" value="1"/>
</dbReference>
<dbReference type="PANTHER" id="PTHR15160">
    <property type="entry name" value="VON HIPPEL-LINDAU PROTEIN"/>
    <property type="match status" value="1"/>
</dbReference>
<dbReference type="Pfam" id="PF02577">
    <property type="entry name" value="BFN_dom"/>
    <property type="match status" value="1"/>
</dbReference>
<dbReference type="SUPFAM" id="SSF103256">
    <property type="entry name" value="Hypothetical protein TM0160"/>
    <property type="match status" value="1"/>
</dbReference>
<dbReference type="PROSITE" id="PS51658">
    <property type="entry name" value="BFN"/>
    <property type="match status" value="1"/>
</dbReference>
<sequence length="164" mass="18115">MGEVRVVGIRVEQPQNQPVLLLREANGDRYLPIWIGQSEAAAIALEQQGVEPPRPLTHDLIRDLIAALGHSLKEVRIVDLQEGTFYADLIFDRNIKVSARPSDSVAIALRVGVPIYVEEAVLAQAGLLIPDESDEEATTAVREDEVEKFKEFLDSVSPDDFKAT</sequence>
<name>Y1829_MYCTO</name>
<reference key="1">
    <citation type="journal article" date="2002" name="J. Bacteriol.">
        <title>Whole-genome comparison of Mycobacterium tuberculosis clinical and laboratory strains.</title>
        <authorList>
            <person name="Fleischmann R.D."/>
            <person name="Alland D."/>
            <person name="Eisen J.A."/>
            <person name="Carpenter L."/>
            <person name="White O."/>
            <person name="Peterson J.D."/>
            <person name="DeBoy R.T."/>
            <person name="Dodson R.J."/>
            <person name="Gwinn M.L."/>
            <person name="Haft D.H."/>
            <person name="Hickey E.K."/>
            <person name="Kolonay J.F."/>
            <person name="Nelson W.C."/>
            <person name="Umayam L.A."/>
            <person name="Ermolaeva M.D."/>
            <person name="Salzberg S.L."/>
            <person name="Delcher A."/>
            <person name="Utterback T.R."/>
            <person name="Weidman J.F."/>
            <person name="Khouri H.M."/>
            <person name="Gill J."/>
            <person name="Mikula A."/>
            <person name="Bishai W."/>
            <person name="Jacobs W.R. Jr."/>
            <person name="Venter J.C."/>
            <person name="Fraser C.M."/>
        </authorList>
    </citation>
    <scope>NUCLEOTIDE SEQUENCE [LARGE SCALE GENOMIC DNA]</scope>
    <source>
        <strain>CDC 1551 / Oshkosh</strain>
    </source>
</reference>
<keyword id="KW-1185">Reference proteome</keyword>